<feature type="chain" id="PRO_0000052461" description="Myoglobin">
    <location>
        <begin position="1"/>
        <end position="154"/>
    </location>
</feature>
<feature type="domain" description="Globin" evidence="2">
    <location>
        <begin position="1"/>
        <end position="147"/>
    </location>
</feature>
<feature type="binding site" description="proximal binding residue" evidence="2">
    <location>
        <position position="96"/>
    </location>
    <ligand>
        <name>heme b</name>
        <dbReference type="ChEBI" id="CHEBI:60344"/>
    </ligand>
    <ligandPart>
        <name>Fe</name>
        <dbReference type="ChEBI" id="CHEBI:18248"/>
    </ligandPart>
</feature>
<gene>
    <name type="primary">GLBB</name>
</gene>
<accession>P51535</accession>
<reference key="1">
    <citation type="journal article" date="1994" name="Mol. Biochem. Parasitol.">
        <title>Sequence, expression and evolution of the globins of the parasitic nematode Nippostrongylus brasiliensis.</title>
        <authorList>
            <person name="Blaxter M.L."/>
            <person name="Ingram L."/>
            <person name="Tweedie S."/>
        </authorList>
    </citation>
    <scope>NUCLEOTIDE SEQUENCE [MRNA]</scope>
</reference>
<dbReference type="EMBL" id="L20895">
    <property type="protein sequence ID" value="AAA65539.1"/>
    <property type="molecule type" value="mRNA"/>
</dbReference>
<dbReference type="SMR" id="P51535"/>
<dbReference type="OMA" id="HINRHAA"/>
<dbReference type="OrthoDB" id="5820458at2759"/>
<dbReference type="GO" id="GO:0005737">
    <property type="term" value="C:cytoplasm"/>
    <property type="evidence" value="ECO:0007669"/>
    <property type="project" value="UniProtKB-SubCell"/>
</dbReference>
<dbReference type="GO" id="GO:0020037">
    <property type="term" value="F:heme binding"/>
    <property type="evidence" value="ECO:0007669"/>
    <property type="project" value="InterPro"/>
</dbReference>
<dbReference type="GO" id="GO:0005506">
    <property type="term" value="F:iron ion binding"/>
    <property type="evidence" value="ECO:0007669"/>
    <property type="project" value="InterPro"/>
</dbReference>
<dbReference type="GO" id="GO:0019825">
    <property type="term" value="F:oxygen binding"/>
    <property type="evidence" value="ECO:0007669"/>
    <property type="project" value="InterPro"/>
</dbReference>
<dbReference type="GO" id="GO:0005344">
    <property type="term" value="F:oxygen carrier activity"/>
    <property type="evidence" value="ECO:0007669"/>
    <property type="project" value="UniProtKB-KW"/>
</dbReference>
<dbReference type="CDD" id="cd01040">
    <property type="entry name" value="Mb-like"/>
    <property type="match status" value="1"/>
</dbReference>
<dbReference type="Gene3D" id="1.10.490.10">
    <property type="entry name" value="Globins"/>
    <property type="match status" value="1"/>
</dbReference>
<dbReference type="InterPro" id="IPR000971">
    <property type="entry name" value="Globin"/>
</dbReference>
<dbReference type="InterPro" id="IPR009050">
    <property type="entry name" value="Globin-like_sf"/>
</dbReference>
<dbReference type="InterPro" id="IPR012292">
    <property type="entry name" value="Globin/Proto"/>
</dbReference>
<dbReference type="InterPro" id="IPR012085">
    <property type="entry name" value="Globin_nematode"/>
</dbReference>
<dbReference type="InterPro" id="IPR044399">
    <property type="entry name" value="Mb-like_M"/>
</dbReference>
<dbReference type="Pfam" id="PF00042">
    <property type="entry name" value="Globin"/>
    <property type="match status" value="1"/>
</dbReference>
<dbReference type="PIRSF" id="PIRSF002026">
    <property type="entry name" value="Nematode_globin"/>
    <property type="match status" value="1"/>
</dbReference>
<dbReference type="SUPFAM" id="SSF46458">
    <property type="entry name" value="Globin-like"/>
    <property type="match status" value="1"/>
</dbReference>
<dbReference type="PROSITE" id="PS01033">
    <property type="entry name" value="GLOBIN"/>
    <property type="match status" value="1"/>
</dbReference>
<name>GLB2_NIPBR</name>
<protein>
    <recommendedName>
        <fullName>Myoglobin</fullName>
    </recommendedName>
    <alternativeName>
        <fullName>Globin, body wall isoform</fullName>
    </alternativeName>
</protein>
<keyword id="KW-0963">Cytoplasm</keyword>
<keyword id="KW-0349">Heme</keyword>
<keyword id="KW-0408">Iron</keyword>
<keyword id="KW-0479">Metal-binding</keyword>
<keyword id="KW-0561">Oxygen transport</keyword>
<keyword id="KW-0813">Transport</keyword>
<evidence type="ECO:0000250" key="1"/>
<evidence type="ECO:0000255" key="2">
    <source>
        <dbReference type="PROSITE-ProRule" id="PRU00238"/>
    </source>
</evidence>
<sequence>MADVKKNCLASLSLAPISKAQQAQVGKDFYKFFFTNHPDLRKYFKGAENFTADDVQKSDRFEKLGSGLLLSVHILANTFDNEDVFRAFCRETIDRHVGRGLDPALWKAFWSVWVAFLESKGGVSGDQKAAWDKLGTVFNDECQHQLAKHGLPHL</sequence>
<organism>
    <name type="scientific">Nippostrongylus brasiliensis</name>
    <name type="common">Rat hookworm</name>
    <dbReference type="NCBI Taxonomy" id="27835"/>
    <lineage>
        <taxon>Eukaryota</taxon>
        <taxon>Metazoa</taxon>
        <taxon>Ecdysozoa</taxon>
        <taxon>Nematoda</taxon>
        <taxon>Chromadorea</taxon>
        <taxon>Rhabditida</taxon>
        <taxon>Rhabditina</taxon>
        <taxon>Rhabditomorpha</taxon>
        <taxon>Strongyloidea</taxon>
        <taxon>Heligmosomidae</taxon>
        <taxon>Nippostrongylus</taxon>
    </lineage>
</organism>
<comment type="subcellular location">
    <subcellularLocation>
        <location evidence="1">Cytoplasm</location>
    </subcellularLocation>
</comment>
<comment type="developmental stage">
    <text>First expressed upon invasion of the mammalian host.</text>
</comment>
<comment type="miscellaneous">
    <text>The globins of the nematode parasite N.brasiliensis have oxygen affinities 100-fold higher than the rodent host's hemoglobins. Two isoforms are found, one located in the cuticle, and the other in the body of the nematode.</text>
</comment>
<comment type="similarity">
    <text evidence="2">Belongs to the globin family.</text>
</comment>
<proteinExistence type="evidence at transcript level"/>